<proteinExistence type="inferred from homology"/>
<gene>
    <name type="primary">UTP25</name>
    <name type="ordered locus">ADL209C</name>
    <name type="ORF">AGOS_ADL209C</name>
</gene>
<reference key="1">
    <citation type="journal article" date="2004" name="Science">
        <title>The Ashbya gossypii genome as a tool for mapping the ancient Saccharomyces cerevisiae genome.</title>
        <authorList>
            <person name="Dietrich F.S."/>
            <person name="Voegeli S."/>
            <person name="Brachat S."/>
            <person name="Lerch A."/>
            <person name="Gates K."/>
            <person name="Steiner S."/>
            <person name="Mohr C."/>
            <person name="Poehlmann R."/>
            <person name="Luedi P."/>
            <person name="Choi S."/>
            <person name="Wing R.A."/>
            <person name="Flavier A."/>
            <person name="Gaffney T.D."/>
            <person name="Philippsen P."/>
        </authorList>
    </citation>
    <scope>NUCLEOTIDE SEQUENCE [LARGE SCALE GENOMIC DNA]</scope>
    <source>
        <strain>ATCC 10895 / CBS 109.51 / FGSC 9923 / NRRL Y-1056</strain>
    </source>
</reference>
<reference key="2">
    <citation type="journal article" date="2013" name="G3 (Bethesda)">
        <title>Genomes of Ashbya fungi isolated from insects reveal four mating-type loci, numerous translocations, lack of transposons, and distinct gene duplications.</title>
        <authorList>
            <person name="Dietrich F.S."/>
            <person name="Voegeli S."/>
            <person name="Kuo S."/>
            <person name="Philippsen P."/>
        </authorList>
    </citation>
    <scope>GENOME REANNOTATION</scope>
    <source>
        <strain>ATCC 10895 / CBS 109.51 / FGSC 9923 / NRRL Y-1056</strain>
    </source>
</reference>
<feature type="chain" id="PRO_0000408099" description="U3 small nucleolar RNA-associated protein 25">
    <location>
        <begin position="1"/>
        <end position="704"/>
    </location>
</feature>
<feature type="region of interest" description="Disordered" evidence="2">
    <location>
        <begin position="1"/>
        <end position="143"/>
    </location>
</feature>
<feature type="compositionally biased region" description="Basic and acidic residues" evidence="2">
    <location>
        <begin position="30"/>
        <end position="45"/>
    </location>
</feature>
<feature type="compositionally biased region" description="Acidic residues" evidence="2">
    <location>
        <begin position="100"/>
        <end position="113"/>
    </location>
</feature>
<feature type="compositionally biased region" description="Acidic residues" evidence="2">
    <location>
        <begin position="125"/>
        <end position="143"/>
    </location>
</feature>
<name>UTP25_EREGS</name>
<comment type="function">
    <text evidence="1">DEAD-box RNA helicase-like protein required for pre-18S rRNA processing, specifically at sites A0, A1, and A2.</text>
</comment>
<comment type="subunit">
    <text evidence="1">Component of the ribosomal small subunit (SSU) processome composed of at least 40 protein subunits and snoRNA U3.</text>
</comment>
<comment type="subcellular location">
    <subcellularLocation>
        <location evidence="1">Nucleus</location>
        <location evidence="1">Nucleolus</location>
    </subcellularLocation>
</comment>
<comment type="similarity">
    <text evidence="3">Belongs to the UTP25 family.</text>
</comment>
<keyword id="KW-0539">Nucleus</keyword>
<keyword id="KW-1185">Reference proteome</keyword>
<keyword id="KW-0687">Ribonucleoprotein</keyword>
<keyword id="KW-0690">Ribosome biogenesis</keyword>
<keyword id="KW-0698">rRNA processing</keyword>
<protein>
    <recommendedName>
        <fullName>U3 small nucleolar RNA-associated protein 25</fullName>
        <shortName>U3 snoRNA-associated protein 25</shortName>
    </recommendedName>
    <alternativeName>
        <fullName>U three protein 25</fullName>
    </alternativeName>
</protein>
<evidence type="ECO:0000250" key="1"/>
<evidence type="ECO:0000256" key="2">
    <source>
        <dbReference type="SAM" id="MobiDB-lite"/>
    </source>
</evidence>
<evidence type="ECO:0000305" key="3"/>
<sequence length="704" mass="80742">MGITDSHGIMDGKRGRKQLRNITRIGRAIHVQEDEAKSREEHTVEEAQAGEQTSNRKRGNHPAEDDGGARESQSYGALLTLLSAEHGKQRKKRLRKAEAEAAEAAEAGEDPEEAITAALENSAQDAEDAEDAFDDSGESDEEQDHFDVHFNRVSAADVAQLDAAFKNGRAQYRVQKEARGEEEILYSKPVASSEGTEGPVRVPARSLRGYAIKQRLRMHNGLTADDPEKPLTPQQKVLLDPMFQYQDILYEYEGYDREREYRELYTLHILNHVYKTRDRILKNNQKLQDNPDQELLDQGFTRPKALVVVPTRATAYDVVDLLLQQSGIEQVDKKSKFKDQFYDPSLPPASKPKSFQHVFKGNTNDFFVLGMKFTRKAIRLYSNFYQSDVIVCSPLGLQLIIENTDKKKRQDDFLSSIEVMVLDQLHSIEFQNIAHVSNIFAHINKIPQQQRDADFSRIRMWYIEDQAKLFRQTMVFTRYISPFANALLNRKCANWAGRVKSHRVVSAEKSVIGQLGLKLRQIFQRFEVLGGSTVDEPDFRFKFFTSVVVPGIEKTTGYDSGILLYIPEYTDFIRVRNYLKDKTRILFGDINEYSDQRQLTSNRALFQLGRIKVLLYTERLHHFRRFELKGVKSVILYKPPSNPEFYQELLRYIGKSAFLGVADLNIATVRCLYSKMDSLALERIVGTKRAAVLTHGQNEVYEFK</sequence>
<organism>
    <name type="scientific">Eremothecium gossypii (strain ATCC 10895 / CBS 109.51 / FGSC 9923 / NRRL Y-1056)</name>
    <name type="common">Yeast</name>
    <name type="synonym">Ashbya gossypii</name>
    <dbReference type="NCBI Taxonomy" id="284811"/>
    <lineage>
        <taxon>Eukaryota</taxon>
        <taxon>Fungi</taxon>
        <taxon>Dikarya</taxon>
        <taxon>Ascomycota</taxon>
        <taxon>Saccharomycotina</taxon>
        <taxon>Saccharomycetes</taxon>
        <taxon>Saccharomycetales</taxon>
        <taxon>Saccharomycetaceae</taxon>
        <taxon>Eremothecium</taxon>
    </lineage>
</organism>
<dbReference type="EMBL" id="AE016817">
    <property type="protein sequence ID" value="AAS51711.1"/>
    <property type="molecule type" value="Genomic_DNA"/>
</dbReference>
<dbReference type="RefSeq" id="NP_983887.1">
    <property type="nucleotide sequence ID" value="NM_209240.1"/>
</dbReference>
<dbReference type="FunCoup" id="Q75AX9">
    <property type="interactions" value="1314"/>
</dbReference>
<dbReference type="STRING" id="284811.Q75AX9"/>
<dbReference type="EnsemblFungi" id="AAS51711">
    <property type="protein sequence ID" value="AAS51711"/>
    <property type="gene ID" value="AGOS_ADL209C"/>
</dbReference>
<dbReference type="GeneID" id="4620027"/>
<dbReference type="KEGG" id="ago:AGOS_ADL209C"/>
<dbReference type="eggNOG" id="KOG2340">
    <property type="taxonomic scope" value="Eukaryota"/>
</dbReference>
<dbReference type="HOGENOM" id="CLU_018705_0_1_1"/>
<dbReference type="InParanoid" id="Q75AX9"/>
<dbReference type="OMA" id="QDRGDTF"/>
<dbReference type="OrthoDB" id="10264378at2759"/>
<dbReference type="Proteomes" id="UP000000591">
    <property type="component" value="Chromosome IV"/>
</dbReference>
<dbReference type="GO" id="GO:0005730">
    <property type="term" value="C:nucleolus"/>
    <property type="evidence" value="ECO:0000318"/>
    <property type="project" value="GO_Central"/>
</dbReference>
<dbReference type="GO" id="GO:0032040">
    <property type="term" value="C:small-subunit processome"/>
    <property type="evidence" value="ECO:0000318"/>
    <property type="project" value="GO_Central"/>
</dbReference>
<dbReference type="GO" id="GO:0019843">
    <property type="term" value="F:rRNA binding"/>
    <property type="evidence" value="ECO:0000318"/>
    <property type="project" value="GO_Central"/>
</dbReference>
<dbReference type="GO" id="GO:0034511">
    <property type="term" value="F:U3 snoRNA binding"/>
    <property type="evidence" value="ECO:0000318"/>
    <property type="project" value="GO_Central"/>
</dbReference>
<dbReference type="GO" id="GO:0000462">
    <property type="term" value="P:maturation of SSU-rRNA from tricistronic rRNA transcript (SSU-rRNA, 5.8S rRNA, LSU-rRNA)"/>
    <property type="evidence" value="ECO:0000318"/>
    <property type="project" value="GO_Central"/>
</dbReference>
<dbReference type="Gene3D" id="3.40.50.300">
    <property type="entry name" value="P-loop containing nucleotide triphosphate hydrolases"/>
    <property type="match status" value="1"/>
</dbReference>
<dbReference type="InterPro" id="IPR027417">
    <property type="entry name" value="P-loop_NTPase"/>
</dbReference>
<dbReference type="InterPro" id="IPR010678">
    <property type="entry name" value="UTP25"/>
</dbReference>
<dbReference type="InterPro" id="IPR053939">
    <property type="entry name" value="UTP25_C"/>
</dbReference>
<dbReference type="InterPro" id="IPR053940">
    <property type="entry name" value="UTP25_NTPase-like"/>
</dbReference>
<dbReference type="PANTHER" id="PTHR12933">
    <property type="entry name" value="ORF PROTEIN-RELATED"/>
    <property type="match status" value="1"/>
</dbReference>
<dbReference type="PANTHER" id="PTHR12933:SF0">
    <property type="entry name" value="U3 SMALL NUCLEOLAR RNA-ASSOCIATED PROTEIN 25 HOMOLOG"/>
    <property type="match status" value="1"/>
</dbReference>
<dbReference type="Pfam" id="PF06862">
    <property type="entry name" value="Utp25_C"/>
    <property type="match status" value="1"/>
</dbReference>
<dbReference type="Pfam" id="PF22916">
    <property type="entry name" value="UTP25_NTPase-like"/>
    <property type="match status" value="1"/>
</dbReference>
<accession>Q75AX9</accession>